<accession>Q8Q0P3</accession>
<gene>
    <name evidence="1" type="primary">cobQ</name>
    <name type="ordered locus">MM_0093</name>
</gene>
<evidence type="ECO:0000255" key="1">
    <source>
        <dbReference type="HAMAP-Rule" id="MF_00028"/>
    </source>
</evidence>
<evidence type="ECO:0000305" key="2"/>
<keyword id="KW-0169">Cobalamin biosynthesis</keyword>
<keyword id="KW-0315">Glutamine amidotransferase</keyword>
<comment type="function">
    <text evidence="1">Catalyzes amidations at positions B, D, E, and G on adenosylcobyrinic A,C-diamide. NH(2) groups are provided by glutamine, and one molecule of ATP is hydrogenolyzed for each amidation.</text>
</comment>
<comment type="pathway">
    <text evidence="1">Cofactor biosynthesis; adenosylcobalamin biosynthesis.</text>
</comment>
<comment type="similarity">
    <text evidence="1">Belongs to the CobB/CobQ family. CobQ subfamily.</text>
</comment>
<comment type="sequence caution" evidence="2">
    <conflict type="erroneous initiation">
        <sequence resource="EMBL-CDS" id="AAM29789"/>
    </conflict>
</comment>
<feature type="chain" id="PRO_0000141350" description="Probable cobyric acid synthase">
    <location>
        <begin position="1"/>
        <end position="485"/>
    </location>
</feature>
<feature type="domain" description="GATase cobBQ-type" evidence="1">
    <location>
        <begin position="250"/>
        <end position="435"/>
    </location>
</feature>
<feature type="active site" description="Nucleophile" evidence="1">
    <location>
        <position position="328"/>
    </location>
</feature>
<feature type="active site" evidence="1">
    <location>
        <position position="427"/>
    </location>
</feature>
<dbReference type="EMBL" id="AE008384">
    <property type="protein sequence ID" value="AAM29789.1"/>
    <property type="status" value="ALT_INIT"/>
    <property type="molecule type" value="Genomic_DNA"/>
</dbReference>
<dbReference type="RefSeq" id="WP_048045984.1">
    <property type="nucleotide sequence ID" value="NC_003901.1"/>
</dbReference>
<dbReference type="SMR" id="Q8Q0P3"/>
<dbReference type="KEGG" id="mma:MM_0093"/>
<dbReference type="PATRIC" id="fig|192952.21.peg.106"/>
<dbReference type="eggNOG" id="arCOG00105">
    <property type="taxonomic scope" value="Archaea"/>
</dbReference>
<dbReference type="HOGENOM" id="CLU_019250_2_2_2"/>
<dbReference type="UniPathway" id="UPA00148"/>
<dbReference type="Proteomes" id="UP000000595">
    <property type="component" value="Chromosome"/>
</dbReference>
<dbReference type="GO" id="GO:0015420">
    <property type="term" value="F:ABC-type vitamin B12 transporter activity"/>
    <property type="evidence" value="ECO:0007669"/>
    <property type="project" value="UniProtKB-UniRule"/>
</dbReference>
<dbReference type="GO" id="GO:0003824">
    <property type="term" value="F:catalytic activity"/>
    <property type="evidence" value="ECO:0007669"/>
    <property type="project" value="InterPro"/>
</dbReference>
<dbReference type="GO" id="GO:0009236">
    <property type="term" value="P:cobalamin biosynthetic process"/>
    <property type="evidence" value="ECO:0007669"/>
    <property type="project" value="UniProtKB-UniRule"/>
</dbReference>
<dbReference type="CDD" id="cd05389">
    <property type="entry name" value="CobQ_N"/>
    <property type="match status" value="1"/>
</dbReference>
<dbReference type="CDD" id="cd01750">
    <property type="entry name" value="GATase1_CobQ"/>
    <property type="match status" value="1"/>
</dbReference>
<dbReference type="Gene3D" id="3.40.50.880">
    <property type="match status" value="1"/>
</dbReference>
<dbReference type="Gene3D" id="3.40.50.300">
    <property type="entry name" value="P-loop containing nucleotide triphosphate hydrolases"/>
    <property type="match status" value="1"/>
</dbReference>
<dbReference type="HAMAP" id="MF_00028">
    <property type="entry name" value="CobQ"/>
    <property type="match status" value="1"/>
</dbReference>
<dbReference type="InterPro" id="IPR029062">
    <property type="entry name" value="Class_I_gatase-like"/>
</dbReference>
<dbReference type="InterPro" id="IPR002586">
    <property type="entry name" value="CobQ/CobB/MinD/ParA_Nub-bd_dom"/>
</dbReference>
<dbReference type="InterPro" id="IPR033949">
    <property type="entry name" value="CobQ_GATase1"/>
</dbReference>
<dbReference type="InterPro" id="IPR047045">
    <property type="entry name" value="CobQ_N"/>
</dbReference>
<dbReference type="InterPro" id="IPR004459">
    <property type="entry name" value="CobQ_synth"/>
</dbReference>
<dbReference type="InterPro" id="IPR011698">
    <property type="entry name" value="GATase_3"/>
</dbReference>
<dbReference type="InterPro" id="IPR027417">
    <property type="entry name" value="P-loop_NTPase"/>
</dbReference>
<dbReference type="NCBIfam" id="TIGR00313">
    <property type="entry name" value="cobQ"/>
    <property type="match status" value="1"/>
</dbReference>
<dbReference type="NCBIfam" id="NF001989">
    <property type="entry name" value="PRK00784.1"/>
    <property type="match status" value="1"/>
</dbReference>
<dbReference type="PANTHER" id="PTHR21343:SF1">
    <property type="entry name" value="COBYRIC ACID SYNTHASE"/>
    <property type="match status" value="1"/>
</dbReference>
<dbReference type="PANTHER" id="PTHR21343">
    <property type="entry name" value="DETHIOBIOTIN SYNTHETASE"/>
    <property type="match status" value="1"/>
</dbReference>
<dbReference type="Pfam" id="PF01656">
    <property type="entry name" value="CbiA"/>
    <property type="match status" value="1"/>
</dbReference>
<dbReference type="Pfam" id="PF07685">
    <property type="entry name" value="GATase_3"/>
    <property type="match status" value="1"/>
</dbReference>
<dbReference type="SUPFAM" id="SSF52317">
    <property type="entry name" value="Class I glutamine amidotransferase-like"/>
    <property type="match status" value="1"/>
</dbReference>
<dbReference type="SUPFAM" id="SSF52540">
    <property type="entry name" value="P-loop containing nucleoside triphosphate hydrolases"/>
    <property type="match status" value="1"/>
</dbReference>
<dbReference type="PROSITE" id="PS51274">
    <property type="entry name" value="GATASE_COBBQ"/>
    <property type="match status" value="1"/>
</dbReference>
<name>COBQ_METMA</name>
<organism>
    <name type="scientific">Methanosarcina mazei (strain ATCC BAA-159 / DSM 3647 / Goe1 / Go1 / JCM 11833 / OCM 88)</name>
    <name type="common">Methanosarcina frisia</name>
    <dbReference type="NCBI Taxonomy" id="192952"/>
    <lineage>
        <taxon>Archaea</taxon>
        <taxon>Methanobacteriati</taxon>
        <taxon>Methanobacteriota</taxon>
        <taxon>Stenosarchaea group</taxon>
        <taxon>Methanomicrobia</taxon>
        <taxon>Methanosarcinales</taxon>
        <taxon>Methanosarcinaceae</taxon>
        <taxon>Methanosarcina</taxon>
    </lineage>
</organism>
<proteinExistence type="inferred from homology"/>
<reference key="1">
    <citation type="journal article" date="2002" name="J. Mol. Microbiol. Biotechnol.">
        <title>The genome of Methanosarcina mazei: evidence for lateral gene transfer between Bacteria and Archaea.</title>
        <authorList>
            <person name="Deppenmeier U."/>
            <person name="Johann A."/>
            <person name="Hartsch T."/>
            <person name="Merkl R."/>
            <person name="Schmitz R.A."/>
            <person name="Martinez-Arias R."/>
            <person name="Henne A."/>
            <person name="Wiezer A."/>
            <person name="Baeumer S."/>
            <person name="Jacobi C."/>
            <person name="Brueggemann H."/>
            <person name="Lienard T."/>
            <person name="Christmann A."/>
            <person name="Boemecke M."/>
            <person name="Steckel S."/>
            <person name="Bhattacharyya A."/>
            <person name="Lykidis A."/>
            <person name="Overbeek R."/>
            <person name="Klenk H.-P."/>
            <person name="Gunsalus R.P."/>
            <person name="Fritz H.-J."/>
            <person name="Gottschalk G."/>
        </authorList>
    </citation>
    <scope>NUCLEOTIDE SEQUENCE [LARGE SCALE GENOMIC DNA]</scope>
    <source>
        <strain>ATCC BAA-159 / DSM 3647 / Goe1 / Go1 / JCM 11833 / OCM 88</strain>
    </source>
</reference>
<protein>
    <recommendedName>
        <fullName evidence="1">Probable cobyric acid synthase</fullName>
    </recommendedName>
</protein>
<sequence>MEKKSLLILGTASHVGKSSVVTAICRILSRSYRVAPFKAQNMSLNSWITKDGKEIGIAQAIQAKAAGTEPTADMNPVLLKPKGDCVSQVVLLGEPYADKSAGQYYDSIEEMHAVLKGALERLWKEHDIIVMEGAGGAAEINLYERDIVNVGTARLTKAPIILVGDIERGGVFASLYGTIALLPEDVRKNVKGFIINKFRGDIEILRPGLKQLEDKTGIPVLGVLPHFKLRIPSEDSVSLGDKEDSKAEKEIEVAVIRLPRISNFTDFEPLEGLVKVRYVDINEELGNPDAIMIPGTKNTVNDLLDLRASGMDKKIQAFKGKVPIFGICGGYQMLGRTIFDSGVENGVEAEFEGLGLLDIGTRFGEYKKRTVQVTKKVNGYGPILRPIDGEEIKGYEIHMGVTDSNRTVFGDDGAIDEDGFVIGTYLHGLFDNRNIRNALVRYLYEKKGLEYEPDEAISENDAYEELANVVEQNIDMEKLFEIAGV</sequence>